<dbReference type="EMBL" id="CP000527">
    <property type="protein sequence ID" value="ABM28629.1"/>
    <property type="molecule type" value="Genomic_DNA"/>
</dbReference>
<dbReference type="RefSeq" id="WP_011792372.1">
    <property type="nucleotide sequence ID" value="NC_008751.1"/>
</dbReference>
<dbReference type="SMR" id="A1VDW3"/>
<dbReference type="KEGG" id="dvl:Dvul_1612"/>
<dbReference type="HOGENOM" id="CLU_033123_0_0_7"/>
<dbReference type="Proteomes" id="UP000009173">
    <property type="component" value="Chromosome"/>
</dbReference>
<dbReference type="GO" id="GO:0009376">
    <property type="term" value="C:HslUV protease complex"/>
    <property type="evidence" value="ECO:0007669"/>
    <property type="project" value="UniProtKB-UniRule"/>
</dbReference>
<dbReference type="GO" id="GO:0005524">
    <property type="term" value="F:ATP binding"/>
    <property type="evidence" value="ECO:0007669"/>
    <property type="project" value="UniProtKB-UniRule"/>
</dbReference>
<dbReference type="GO" id="GO:0016887">
    <property type="term" value="F:ATP hydrolysis activity"/>
    <property type="evidence" value="ECO:0007669"/>
    <property type="project" value="InterPro"/>
</dbReference>
<dbReference type="GO" id="GO:0008233">
    <property type="term" value="F:peptidase activity"/>
    <property type="evidence" value="ECO:0007669"/>
    <property type="project" value="InterPro"/>
</dbReference>
<dbReference type="GO" id="GO:0036402">
    <property type="term" value="F:proteasome-activating activity"/>
    <property type="evidence" value="ECO:0007669"/>
    <property type="project" value="UniProtKB-UniRule"/>
</dbReference>
<dbReference type="GO" id="GO:0043335">
    <property type="term" value="P:protein unfolding"/>
    <property type="evidence" value="ECO:0007669"/>
    <property type="project" value="UniProtKB-UniRule"/>
</dbReference>
<dbReference type="GO" id="GO:0051603">
    <property type="term" value="P:proteolysis involved in protein catabolic process"/>
    <property type="evidence" value="ECO:0007669"/>
    <property type="project" value="TreeGrafter"/>
</dbReference>
<dbReference type="CDD" id="cd19498">
    <property type="entry name" value="RecA-like_HslU"/>
    <property type="match status" value="1"/>
</dbReference>
<dbReference type="FunFam" id="3.40.50.300:FF:000220">
    <property type="entry name" value="ATP-dependent protease ATPase subunit HslU"/>
    <property type="match status" value="1"/>
</dbReference>
<dbReference type="Gene3D" id="1.10.8.60">
    <property type="match status" value="1"/>
</dbReference>
<dbReference type="Gene3D" id="1.10.8.10">
    <property type="entry name" value="DNA helicase RuvA subunit, C-terminal domain"/>
    <property type="match status" value="2"/>
</dbReference>
<dbReference type="Gene3D" id="3.40.50.300">
    <property type="entry name" value="P-loop containing nucleotide triphosphate hydrolases"/>
    <property type="match status" value="2"/>
</dbReference>
<dbReference type="HAMAP" id="MF_00249">
    <property type="entry name" value="HslU"/>
    <property type="match status" value="1"/>
</dbReference>
<dbReference type="InterPro" id="IPR003593">
    <property type="entry name" value="AAA+_ATPase"/>
</dbReference>
<dbReference type="InterPro" id="IPR050052">
    <property type="entry name" value="ATP-dep_Clp_protease_ClpX"/>
</dbReference>
<dbReference type="InterPro" id="IPR003959">
    <property type="entry name" value="ATPase_AAA_core"/>
</dbReference>
<dbReference type="InterPro" id="IPR019489">
    <property type="entry name" value="Clp_ATPase_C"/>
</dbReference>
<dbReference type="InterPro" id="IPR004491">
    <property type="entry name" value="HslU"/>
</dbReference>
<dbReference type="InterPro" id="IPR027417">
    <property type="entry name" value="P-loop_NTPase"/>
</dbReference>
<dbReference type="NCBIfam" id="TIGR00390">
    <property type="entry name" value="hslU"/>
    <property type="match status" value="1"/>
</dbReference>
<dbReference type="NCBIfam" id="NF003544">
    <property type="entry name" value="PRK05201.1"/>
    <property type="match status" value="1"/>
</dbReference>
<dbReference type="PANTHER" id="PTHR48102">
    <property type="entry name" value="ATP-DEPENDENT CLP PROTEASE ATP-BINDING SUBUNIT CLPX-LIKE, MITOCHONDRIAL-RELATED"/>
    <property type="match status" value="1"/>
</dbReference>
<dbReference type="PANTHER" id="PTHR48102:SF3">
    <property type="entry name" value="ATP-DEPENDENT PROTEASE ATPASE SUBUNIT HSLU"/>
    <property type="match status" value="1"/>
</dbReference>
<dbReference type="Pfam" id="PF00004">
    <property type="entry name" value="AAA"/>
    <property type="match status" value="1"/>
</dbReference>
<dbReference type="Pfam" id="PF07724">
    <property type="entry name" value="AAA_2"/>
    <property type="match status" value="1"/>
</dbReference>
<dbReference type="SMART" id="SM00382">
    <property type="entry name" value="AAA"/>
    <property type="match status" value="1"/>
</dbReference>
<dbReference type="SMART" id="SM01086">
    <property type="entry name" value="ClpB_D2-small"/>
    <property type="match status" value="1"/>
</dbReference>
<dbReference type="SUPFAM" id="SSF52540">
    <property type="entry name" value="P-loop containing nucleoside triphosphate hydrolases"/>
    <property type="match status" value="1"/>
</dbReference>
<feature type="chain" id="PRO_1000012732" description="ATP-dependent protease ATPase subunit HslU">
    <location>
        <begin position="1"/>
        <end position="441"/>
    </location>
</feature>
<feature type="binding site" evidence="1">
    <location>
        <position position="18"/>
    </location>
    <ligand>
        <name>ATP</name>
        <dbReference type="ChEBI" id="CHEBI:30616"/>
    </ligand>
</feature>
<feature type="binding site" evidence="1">
    <location>
        <begin position="60"/>
        <end position="65"/>
    </location>
    <ligand>
        <name>ATP</name>
        <dbReference type="ChEBI" id="CHEBI:30616"/>
    </ligand>
</feature>
<feature type="binding site" evidence="1">
    <location>
        <position position="253"/>
    </location>
    <ligand>
        <name>ATP</name>
        <dbReference type="ChEBI" id="CHEBI:30616"/>
    </ligand>
</feature>
<feature type="binding site" evidence="1">
    <location>
        <position position="319"/>
    </location>
    <ligand>
        <name>ATP</name>
        <dbReference type="ChEBI" id="CHEBI:30616"/>
    </ligand>
</feature>
<feature type="binding site" evidence="1">
    <location>
        <position position="391"/>
    </location>
    <ligand>
        <name>ATP</name>
        <dbReference type="ChEBI" id="CHEBI:30616"/>
    </ligand>
</feature>
<evidence type="ECO:0000255" key="1">
    <source>
        <dbReference type="HAMAP-Rule" id="MF_00249"/>
    </source>
</evidence>
<keyword id="KW-0067">ATP-binding</keyword>
<keyword id="KW-0143">Chaperone</keyword>
<keyword id="KW-0963">Cytoplasm</keyword>
<keyword id="KW-0547">Nucleotide-binding</keyword>
<keyword id="KW-0346">Stress response</keyword>
<gene>
    <name evidence="1" type="primary">hslU</name>
    <name type="ordered locus">Dvul_1612</name>
</gene>
<name>HSLU_NITV4</name>
<sequence>MSTLTPREIVSELDRFVVGQEKAKRMVAVAMRNRWRRQRLEPSLRDEVAPKNIIMMGPTGVGKTEIARRLARLCGAPFIKVEATKYTEVGYVGRDVESMVRDLMEIGVSLIRDEEATRVRARAEAAAEERLLDLLLPQSPADGGETRQSTRDKLRGLWRQGHLDDREVDMEVEESTKGPQMDIFAMPGMESMGNQFRDLMGKAFPARRKMRKMKLREAWNLLVDEEASRLLDQDKVVDIARERVEQTGIIFIDELDKVASGEGTHRTTDISREGVQRDLLPIVEGSVVNTKYGMVRTDHILFIAAGAFHFSKPSDLIPELQGRFPLRVELDALGRDEFYRILTEPHNALTRQYAALLATEGVTVSFTDDGLREIAAFAEEVNEETENIGARRLYTMMERILADISFDAPDRPGEHVTVDAAYVRTHLEDVRVDKDLSRYIL</sequence>
<proteinExistence type="inferred from homology"/>
<comment type="function">
    <text evidence="1">ATPase subunit of a proteasome-like degradation complex; this subunit has chaperone activity. The binding of ATP and its subsequent hydrolysis by HslU are essential for unfolding of protein substrates subsequently hydrolyzed by HslV. HslU recognizes the N-terminal part of its protein substrates and unfolds these before they are guided to HslV for hydrolysis.</text>
</comment>
<comment type="subunit">
    <text evidence="1">A double ring-shaped homohexamer of HslV is capped on each side by a ring-shaped HslU homohexamer. The assembly of the HslU/HslV complex is dependent on binding of ATP.</text>
</comment>
<comment type="subcellular location">
    <subcellularLocation>
        <location evidence="1">Cytoplasm</location>
    </subcellularLocation>
</comment>
<comment type="similarity">
    <text evidence="1">Belongs to the ClpX chaperone family. HslU subfamily.</text>
</comment>
<reference key="1">
    <citation type="journal article" date="2009" name="Environ. Microbiol.">
        <title>Contribution of mobile genetic elements to Desulfovibrio vulgaris genome plasticity.</title>
        <authorList>
            <person name="Walker C.B."/>
            <person name="Stolyar S."/>
            <person name="Chivian D."/>
            <person name="Pinel N."/>
            <person name="Gabster J.A."/>
            <person name="Dehal P.S."/>
            <person name="He Z."/>
            <person name="Yang Z.K."/>
            <person name="Yen H.C."/>
            <person name="Zhou J."/>
            <person name="Wall J.D."/>
            <person name="Hazen T.C."/>
            <person name="Arkin A.P."/>
            <person name="Stahl D.A."/>
        </authorList>
    </citation>
    <scope>NUCLEOTIDE SEQUENCE [LARGE SCALE GENOMIC DNA]</scope>
    <source>
        <strain>DP4</strain>
    </source>
</reference>
<protein>
    <recommendedName>
        <fullName evidence="1">ATP-dependent protease ATPase subunit HslU</fullName>
    </recommendedName>
    <alternativeName>
        <fullName evidence="1">Unfoldase HslU</fullName>
    </alternativeName>
</protein>
<organism>
    <name type="scientific">Nitratidesulfovibrio vulgaris (strain DP4)</name>
    <name type="common">Desulfovibrio vulgaris</name>
    <dbReference type="NCBI Taxonomy" id="391774"/>
    <lineage>
        <taxon>Bacteria</taxon>
        <taxon>Pseudomonadati</taxon>
        <taxon>Thermodesulfobacteriota</taxon>
        <taxon>Desulfovibrionia</taxon>
        <taxon>Desulfovibrionales</taxon>
        <taxon>Desulfovibrionaceae</taxon>
        <taxon>Nitratidesulfovibrio</taxon>
    </lineage>
</organism>
<accession>A1VDW3</accession>